<organism>
    <name type="scientific">Homo sapiens</name>
    <name type="common">Human</name>
    <dbReference type="NCBI Taxonomy" id="9606"/>
    <lineage>
        <taxon>Eukaryota</taxon>
        <taxon>Metazoa</taxon>
        <taxon>Chordata</taxon>
        <taxon>Craniata</taxon>
        <taxon>Vertebrata</taxon>
        <taxon>Euteleostomi</taxon>
        <taxon>Mammalia</taxon>
        <taxon>Eutheria</taxon>
        <taxon>Euarchontoglires</taxon>
        <taxon>Primates</taxon>
        <taxon>Haplorrhini</taxon>
        <taxon>Catarrhini</taxon>
        <taxon>Hominidae</taxon>
        <taxon>Homo</taxon>
    </lineage>
</organism>
<dbReference type="EC" id="3.2.2.-"/>
<dbReference type="EC" id="4.2.99.18"/>
<dbReference type="EMBL" id="AB079068">
    <property type="protein sequence ID" value="BAC06476.1"/>
    <property type="molecule type" value="mRNA"/>
</dbReference>
<dbReference type="EMBL" id="AK026055">
    <property type="protein sequence ID" value="BAB15337.1"/>
    <property type="molecule type" value="mRNA"/>
</dbReference>
<dbReference type="EMBL" id="AK128372">
    <property type="status" value="NOT_ANNOTATED_CDS"/>
    <property type="molecule type" value="mRNA"/>
</dbReference>
<dbReference type="EMBL" id="AY257544">
    <property type="protein sequence ID" value="AAO74826.1"/>
    <property type="molecule type" value="Genomic_DNA"/>
</dbReference>
<dbReference type="EMBL" id="AC068338">
    <property type="status" value="NOT_ANNOTATED_CDS"/>
    <property type="molecule type" value="Genomic_DNA"/>
</dbReference>
<dbReference type="EMBL" id="CH471136">
    <property type="protein sequence ID" value="EAW99255.1"/>
    <property type="molecule type" value="Genomic_DNA"/>
</dbReference>
<dbReference type="EMBL" id="CH471136">
    <property type="protein sequence ID" value="EAW99260.1"/>
    <property type="molecule type" value="Genomic_DNA"/>
</dbReference>
<dbReference type="EMBL" id="BC010876">
    <property type="protein sequence ID" value="AAH10876.1"/>
    <property type="molecule type" value="mRNA"/>
</dbReference>
<dbReference type="CCDS" id="CCDS10278.1"/>
<dbReference type="RefSeq" id="NP_001243481.1">
    <property type="nucleotide sequence ID" value="NM_001256552.1"/>
</dbReference>
<dbReference type="RefSeq" id="NP_078884.2">
    <property type="nucleotide sequence ID" value="NM_024608.4"/>
</dbReference>
<dbReference type="RefSeq" id="XP_005254716.1">
    <property type="nucleotide sequence ID" value="XM_005254659.4"/>
</dbReference>
<dbReference type="RefSeq" id="XP_006720743.1">
    <property type="nucleotide sequence ID" value="XM_006720680.1"/>
</dbReference>
<dbReference type="RefSeq" id="XP_006720744.1">
    <property type="nucleotide sequence ID" value="XM_006720681.1"/>
</dbReference>
<dbReference type="RefSeq" id="XP_011520304.1">
    <property type="nucleotide sequence ID" value="XM_011522002.1"/>
</dbReference>
<dbReference type="RefSeq" id="XP_011520305.1">
    <property type="nucleotide sequence ID" value="XM_011522003.2"/>
</dbReference>
<dbReference type="RefSeq" id="XP_011520306.1">
    <property type="nucleotide sequence ID" value="XM_011522004.2"/>
</dbReference>
<dbReference type="PDB" id="1TDH">
    <property type="method" value="X-ray"/>
    <property type="resolution" value="2.10 A"/>
    <property type="chains" value="A=1-390"/>
</dbReference>
<dbReference type="PDB" id="4NRV">
    <property type="method" value="X-ray"/>
    <property type="resolution" value="2.60 A"/>
    <property type="chains" value="A=2-290"/>
</dbReference>
<dbReference type="PDB" id="5ITQ">
    <property type="method" value="X-ray"/>
    <property type="resolution" value="1.48 A"/>
    <property type="chains" value="A=1-290"/>
</dbReference>
<dbReference type="PDB" id="5ITR">
    <property type="method" value="X-ray"/>
    <property type="resolution" value="2.46 A"/>
    <property type="chains" value="A/B/C=1-390"/>
</dbReference>
<dbReference type="PDB" id="5ITT">
    <property type="method" value="X-ray"/>
    <property type="resolution" value="2.53 A"/>
    <property type="chains" value="A/B/C=1-390"/>
</dbReference>
<dbReference type="PDB" id="5ITU">
    <property type="method" value="X-ray"/>
    <property type="resolution" value="2.41 A"/>
    <property type="chains" value="A/B/C=1-390"/>
</dbReference>
<dbReference type="PDB" id="5ITX">
    <property type="method" value="X-ray"/>
    <property type="resolution" value="2.65 A"/>
    <property type="chains" value="A/B/E=1-390"/>
</dbReference>
<dbReference type="PDB" id="5ITY">
    <property type="method" value="X-ray"/>
    <property type="resolution" value="2.48 A"/>
    <property type="chains" value="A/B/C=1-390"/>
</dbReference>
<dbReference type="PDB" id="6LWA">
    <property type="method" value="X-ray"/>
    <property type="resolution" value="2.76 A"/>
    <property type="chains" value="A/D/G=1-295"/>
</dbReference>
<dbReference type="PDB" id="6LWB">
    <property type="method" value="X-ray"/>
    <property type="resolution" value="2.55 A"/>
    <property type="chains" value="A/D/G=1-295"/>
</dbReference>
<dbReference type="PDB" id="6LWC">
    <property type="method" value="X-ray"/>
    <property type="resolution" value="2.91 A"/>
    <property type="chains" value="A/D=1-295"/>
</dbReference>
<dbReference type="PDB" id="6LWD">
    <property type="method" value="X-ray"/>
    <property type="resolution" value="2.41 A"/>
    <property type="chains" value="A/D/G=1-295"/>
</dbReference>
<dbReference type="PDB" id="6LWF">
    <property type="method" value="X-ray"/>
    <property type="resolution" value="2.79 A"/>
    <property type="chains" value="A/D=1-295"/>
</dbReference>
<dbReference type="PDB" id="6LWG">
    <property type="method" value="X-ray"/>
    <property type="resolution" value="2.53 A"/>
    <property type="chains" value="A/D/G=1-295"/>
</dbReference>
<dbReference type="PDB" id="6LWH">
    <property type="method" value="X-ray"/>
    <property type="resolution" value="2.78 A"/>
    <property type="chains" value="A/D/G=1-295"/>
</dbReference>
<dbReference type="PDB" id="6LWI">
    <property type="method" value="X-ray"/>
    <property type="resolution" value="2.72 A"/>
    <property type="chains" value="A/D/G=1-295"/>
</dbReference>
<dbReference type="PDB" id="6LWJ">
    <property type="method" value="X-ray"/>
    <property type="resolution" value="2.83 A"/>
    <property type="chains" value="A/D/G=1-295"/>
</dbReference>
<dbReference type="PDB" id="6LWK">
    <property type="method" value="X-ray"/>
    <property type="resolution" value="2.88 A"/>
    <property type="chains" value="A/D/G=1-295"/>
</dbReference>
<dbReference type="PDB" id="6LWL">
    <property type="method" value="X-ray"/>
    <property type="resolution" value="2.55 A"/>
    <property type="chains" value="A/D/G=1-295"/>
</dbReference>
<dbReference type="PDB" id="6LWM">
    <property type="method" value="X-ray"/>
    <property type="resolution" value="2.67 A"/>
    <property type="chains" value="A/D/G=1-295"/>
</dbReference>
<dbReference type="PDB" id="6LWN">
    <property type="method" value="X-ray"/>
    <property type="resolution" value="2.74 A"/>
    <property type="chains" value="A/D/G=1-295"/>
</dbReference>
<dbReference type="PDB" id="6LWO">
    <property type="method" value="X-ray"/>
    <property type="resolution" value="2.51 A"/>
    <property type="chains" value="A/D/G=1-295"/>
</dbReference>
<dbReference type="PDB" id="6LWP">
    <property type="method" value="X-ray"/>
    <property type="resolution" value="2.64 A"/>
    <property type="chains" value="A/D/G=1-295"/>
</dbReference>
<dbReference type="PDB" id="6LWQ">
    <property type="method" value="X-ray"/>
    <property type="resolution" value="2.89 A"/>
    <property type="chains" value="A/D/G=1-295"/>
</dbReference>
<dbReference type="PDB" id="6LWR">
    <property type="method" value="X-ray"/>
    <property type="resolution" value="2.90 A"/>
    <property type="chains" value="A/E=1-295"/>
</dbReference>
<dbReference type="PDB" id="7TMX">
    <property type="method" value="X-ray"/>
    <property type="resolution" value="2.30 A"/>
    <property type="chains" value="A/B=359-378"/>
</dbReference>
<dbReference type="PDB" id="8FTJ">
    <property type="method" value="X-ray"/>
    <property type="resolution" value="2.30 A"/>
    <property type="chains" value="A=2-290"/>
</dbReference>
<dbReference type="PDBsum" id="1TDH"/>
<dbReference type="PDBsum" id="4NRV"/>
<dbReference type="PDBsum" id="5ITQ"/>
<dbReference type="PDBsum" id="5ITR"/>
<dbReference type="PDBsum" id="5ITT"/>
<dbReference type="PDBsum" id="5ITU"/>
<dbReference type="PDBsum" id="5ITX"/>
<dbReference type="PDBsum" id="5ITY"/>
<dbReference type="PDBsum" id="6LWA"/>
<dbReference type="PDBsum" id="6LWB"/>
<dbReference type="PDBsum" id="6LWC"/>
<dbReference type="PDBsum" id="6LWD"/>
<dbReference type="PDBsum" id="6LWF"/>
<dbReference type="PDBsum" id="6LWG"/>
<dbReference type="PDBsum" id="6LWH"/>
<dbReference type="PDBsum" id="6LWI"/>
<dbReference type="PDBsum" id="6LWJ"/>
<dbReference type="PDBsum" id="6LWK"/>
<dbReference type="PDBsum" id="6LWL"/>
<dbReference type="PDBsum" id="6LWM"/>
<dbReference type="PDBsum" id="6LWN"/>
<dbReference type="PDBsum" id="6LWO"/>
<dbReference type="PDBsum" id="6LWP"/>
<dbReference type="PDBsum" id="6LWQ"/>
<dbReference type="PDBsum" id="6LWR"/>
<dbReference type="PDBsum" id="7TMX"/>
<dbReference type="PDBsum" id="8FTJ"/>
<dbReference type="SASBDB" id="Q96FI4"/>
<dbReference type="SMR" id="Q96FI4"/>
<dbReference type="BioGRID" id="122787">
    <property type="interactions" value="299"/>
</dbReference>
<dbReference type="CORUM" id="Q96FI4"/>
<dbReference type="FunCoup" id="Q96FI4">
    <property type="interactions" value="1750"/>
</dbReference>
<dbReference type="IntAct" id="Q96FI4">
    <property type="interactions" value="262"/>
</dbReference>
<dbReference type="STRING" id="9606.ENSP00000347170"/>
<dbReference type="ChEMBL" id="CHEMBL4523426"/>
<dbReference type="DrugBank" id="DB09130">
    <property type="generic name" value="Copper"/>
</dbReference>
<dbReference type="DrugBank" id="DB14490">
    <property type="generic name" value="Ferrous ascorbate"/>
</dbReference>
<dbReference type="DrugBank" id="DB14491">
    <property type="generic name" value="Ferrous fumarate"/>
</dbReference>
<dbReference type="DrugBank" id="DB14488">
    <property type="generic name" value="Ferrous gluconate"/>
</dbReference>
<dbReference type="DrugBank" id="DB14501">
    <property type="generic name" value="Ferrous glycine sulfate"/>
</dbReference>
<dbReference type="DrugBank" id="DB14489">
    <property type="generic name" value="Ferrous succinate"/>
</dbReference>
<dbReference type="DrugBank" id="DB01592">
    <property type="generic name" value="Iron"/>
</dbReference>
<dbReference type="GlyGen" id="Q96FI4">
    <property type="glycosylation" value="1 site"/>
</dbReference>
<dbReference type="iPTMnet" id="Q96FI4"/>
<dbReference type="PhosphoSitePlus" id="Q96FI4"/>
<dbReference type="BioMuta" id="NEIL1"/>
<dbReference type="DMDM" id="56404654"/>
<dbReference type="MassIVE" id="Q96FI4"/>
<dbReference type="PaxDb" id="9606-ENSP00000347170"/>
<dbReference type="PeptideAtlas" id="Q96FI4"/>
<dbReference type="ProteomicsDB" id="76532"/>
<dbReference type="Antibodypedia" id="27258">
    <property type="antibodies" value="310 antibodies from 32 providers"/>
</dbReference>
<dbReference type="DNASU" id="79661"/>
<dbReference type="Ensembl" id="ENST00000355059.9">
    <property type="protein sequence ID" value="ENSP00000347170.4"/>
    <property type="gene ID" value="ENSG00000140398.14"/>
</dbReference>
<dbReference type="Ensembl" id="ENST00000564784.5">
    <property type="protein sequence ID" value="ENSP00000457352.1"/>
    <property type="gene ID" value="ENSG00000140398.14"/>
</dbReference>
<dbReference type="Ensembl" id="ENST00000569035.5">
    <property type="protein sequence ID" value="ENSP00000455730.1"/>
    <property type="gene ID" value="ENSG00000140398.14"/>
</dbReference>
<dbReference type="GeneID" id="79661"/>
<dbReference type="KEGG" id="hsa:79661"/>
<dbReference type="MANE-Select" id="ENST00000355059.9">
    <property type="protein sequence ID" value="ENSP00000347170.4"/>
    <property type="RefSeq nucleotide sequence ID" value="NM_024608.4"/>
    <property type="RefSeq protein sequence ID" value="NP_078884.2"/>
</dbReference>
<dbReference type="UCSC" id="uc002bad.5">
    <property type="organism name" value="human"/>
</dbReference>
<dbReference type="AGR" id="HGNC:18448"/>
<dbReference type="CTD" id="79661"/>
<dbReference type="DisGeNET" id="79661"/>
<dbReference type="GeneCards" id="NEIL1"/>
<dbReference type="HGNC" id="HGNC:18448">
    <property type="gene designation" value="NEIL1"/>
</dbReference>
<dbReference type="HPA" id="ENSG00000140398">
    <property type="expression patterns" value="Low tissue specificity"/>
</dbReference>
<dbReference type="MalaCards" id="NEIL1"/>
<dbReference type="MIM" id="608844">
    <property type="type" value="gene"/>
</dbReference>
<dbReference type="neXtProt" id="NX_Q96FI4"/>
<dbReference type="OpenTargets" id="ENSG00000140398"/>
<dbReference type="PharmGKB" id="PA38334"/>
<dbReference type="VEuPathDB" id="HostDB:ENSG00000140398"/>
<dbReference type="eggNOG" id="ENOG502QSPK">
    <property type="taxonomic scope" value="Eukaryota"/>
</dbReference>
<dbReference type="GeneTree" id="ENSGT00940000153230"/>
<dbReference type="HOGENOM" id="CLU_051284_0_0_1"/>
<dbReference type="InParanoid" id="Q96FI4"/>
<dbReference type="OMA" id="IMFEYKS"/>
<dbReference type="OrthoDB" id="6260718at2759"/>
<dbReference type="PAN-GO" id="Q96FI4">
    <property type="GO annotations" value="4 GO annotations based on evolutionary models"/>
</dbReference>
<dbReference type="PhylomeDB" id="Q96FI4"/>
<dbReference type="TreeFam" id="TF333272"/>
<dbReference type="PathwayCommons" id="Q96FI4"/>
<dbReference type="Reactome" id="R-HSA-110328">
    <property type="pathway name" value="Recognition and association of DNA glycosylase with site containing an affected pyrimidine"/>
</dbReference>
<dbReference type="Reactome" id="R-HSA-110329">
    <property type="pathway name" value="Cleavage of the damaged pyrimidine"/>
</dbReference>
<dbReference type="Reactome" id="R-HSA-5649702">
    <property type="pathway name" value="APEX1-Independent Resolution of AP Sites via the Single Nucleotide Replacement Pathway"/>
</dbReference>
<dbReference type="Reactome" id="R-HSA-9616334">
    <property type="pathway name" value="Defective Base Excision Repair Associated with NEIL1"/>
</dbReference>
<dbReference type="SignaLink" id="Q96FI4"/>
<dbReference type="SIGNOR" id="Q96FI4"/>
<dbReference type="BioGRID-ORCS" id="79661">
    <property type="hits" value="10 hits in 1146 CRISPR screens"/>
</dbReference>
<dbReference type="CD-CODE" id="8C2F96ED">
    <property type="entry name" value="Centrosome"/>
</dbReference>
<dbReference type="CD-CODE" id="91857CE7">
    <property type="entry name" value="Nucleolus"/>
</dbReference>
<dbReference type="ChiTaRS" id="NEIL1">
    <property type="organism name" value="human"/>
</dbReference>
<dbReference type="EvolutionaryTrace" id="Q96FI4"/>
<dbReference type="GeneWiki" id="NEIL1"/>
<dbReference type="GenomeRNAi" id="79661"/>
<dbReference type="Pharos" id="Q96FI4">
    <property type="development level" value="Tbio"/>
</dbReference>
<dbReference type="PRO" id="PR:Q96FI4"/>
<dbReference type="Proteomes" id="UP000005640">
    <property type="component" value="Chromosome 15"/>
</dbReference>
<dbReference type="RNAct" id="Q96FI4">
    <property type="molecule type" value="protein"/>
</dbReference>
<dbReference type="Bgee" id="ENSG00000140398">
    <property type="expression patterns" value="Expressed in right uterine tube and 170 other cell types or tissues"/>
</dbReference>
<dbReference type="ExpressionAtlas" id="Q96FI4">
    <property type="expression patterns" value="baseline and differential"/>
</dbReference>
<dbReference type="GO" id="GO:0005813">
    <property type="term" value="C:centrosome"/>
    <property type="evidence" value="ECO:0007669"/>
    <property type="project" value="UniProtKB-SubCell"/>
</dbReference>
<dbReference type="GO" id="GO:0005694">
    <property type="term" value="C:chromosome"/>
    <property type="evidence" value="ECO:0007669"/>
    <property type="project" value="UniProtKB-SubCell"/>
</dbReference>
<dbReference type="GO" id="GO:0005737">
    <property type="term" value="C:cytoplasm"/>
    <property type="evidence" value="ECO:0000314"/>
    <property type="project" value="UniProtKB"/>
</dbReference>
<dbReference type="GO" id="GO:0005829">
    <property type="term" value="C:cytosol"/>
    <property type="evidence" value="ECO:0000304"/>
    <property type="project" value="Reactome"/>
</dbReference>
<dbReference type="GO" id="GO:0005654">
    <property type="term" value="C:nucleoplasm"/>
    <property type="evidence" value="ECO:0000314"/>
    <property type="project" value="HPA"/>
</dbReference>
<dbReference type="GO" id="GO:0005634">
    <property type="term" value="C:nucleus"/>
    <property type="evidence" value="ECO:0000314"/>
    <property type="project" value="UniProtKB"/>
</dbReference>
<dbReference type="GO" id="GO:0140078">
    <property type="term" value="F:class I DNA-(apurinic or apyrimidinic site) endonuclease activity"/>
    <property type="evidence" value="ECO:0007669"/>
    <property type="project" value="UniProtKB-EC"/>
</dbReference>
<dbReference type="GO" id="GO:0003684">
    <property type="term" value="F:damaged DNA binding"/>
    <property type="evidence" value="ECO:0007669"/>
    <property type="project" value="InterPro"/>
</dbReference>
<dbReference type="GO" id="GO:0019104">
    <property type="term" value="F:DNA N-glycosylase activity"/>
    <property type="evidence" value="ECO:0000318"/>
    <property type="project" value="GO_Central"/>
</dbReference>
<dbReference type="GO" id="GO:0003906">
    <property type="term" value="F:DNA-(apurinic or apyrimidinic site) endonuclease activity"/>
    <property type="evidence" value="ECO:0000318"/>
    <property type="project" value="GO_Central"/>
</dbReference>
<dbReference type="GO" id="GO:0016798">
    <property type="term" value="F:hydrolase activity, acting on glycosyl bonds"/>
    <property type="evidence" value="ECO:0000314"/>
    <property type="project" value="UniProtKB"/>
</dbReference>
<dbReference type="GO" id="GO:0008270">
    <property type="term" value="F:zinc ion binding"/>
    <property type="evidence" value="ECO:0007669"/>
    <property type="project" value="InterPro"/>
</dbReference>
<dbReference type="GO" id="GO:0006284">
    <property type="term" value="P:base-excision repair"/>
    <property type="evidence" value="ECO:0000314"/>
    <property type="project" value="UniProtKB"/>
</dbReference>
<dbReference type="GO" id="GO:0006287">
    <property type="term" value="P:base-excision repair, gap-filling"/>
    <property type="evidence" value="ECO:0000304"/>
    <property type="project" value="Reactome"/>
</dbReference>
<dbReference type="GO" id="GO:0045008">
    <property type="term" value="P:depyrimidination"/>
    <property type="evidence" value="ECO:0000304"/>
    <property type="project" value="Reactome"/>
</dbReference>
<dbReference type="GO" id="GO:0032074">
    <property type="term" value="P:negative regulation of nuclease activity"/>
    <property type="evidence" value="ECO:0000314"/>
    <property type="project" value="UniProtKB"/>
</dbReference>
<dbReference type="GO" id="GO:0006979">
    <property type="term" value="P:response to oxidative stress"/>
    <property type="evidence" value="ECO:0000314"/>
    <property type="project" value="UniProtKB"/>
</dbReference>
<dbReference type="CDD" id="cd08967">
    <property type="entry name" value="MeNeil1_N"/>
    <property type="match status" value="1"/>
</dbReference>
<dbReference type="DisProt" id="DP01480"/>
<dbReference type="FunFam" id="1.10.8.50:FF:000007">
    <property type="entry name" value="endonuclease 8-like 1 isoform X1"/>
    <property type="match status" value="1"/>
</dbReference>
<dbReference type="FunFam" id="3.20.190.10:FF:000003">
    <property type="entry name" value="endonuclease 8-like 1 isoform X1"/>
    <property type="match status" value="1"/>
</dbReference>
<dbReference type="Gene3D" id="1.10.8.50">
    <property type="match status" value="1"/>
</dbReference>
<dbReference type="Gene3D" id="3.20.190.10">
    <property type="entry name" value="MutM-like, N-terminal"/>
    <property type="match status" value="1"/>
</dbReference>
<dbReference type="InterPro" id="IPR015886">
    <property type="entry name" value="DNA_glyclase/AP_lyase_DNA-bd"/>
</dbReference>
<dbReference type="InterPro" id="IPR015371">
    <property type="entry name" value="Endonuclease-VIII_DNA-bd"/>
</dbReference>
<dbReference type="InterPro" id="IPR012319">
    <property type="entry name" value="FPG_cat"/>
</dbReference>
<dbReference type="InterPro" id="IPR035937">
    <property type="entry name" value="MutM-like_N-ter"/>
</dbReference>
<dbReference type="InterPro" id="IPR010979">
    <property type="entry name" value="Ribosomal_uS13-like_H2TH"/>
</dbReference>
<dbReference type="PANTHER" id="PTHR22993:SF27">
    <property type="entry name" value="ENDONUCLEASE 8-LIKE 1"/>
    <property type="match status" value="1"/>
</dbReference>
<dbReference type="PANTHER" id="PTHR22993">
    <property type="entry name" value="FORMAMIDOPYRIMIDINE-DNA GLYCOSYLASE"/>
    <property type="match status" value="1"/>
</dbReference>
<dbReference type="Pfam" id="PF01149">
    <property type="entry name" value="Fapy_DNA_glyco"/>
    <property type="match status" value="1"/>
</dbReference>
<dbReference type="Pfam" id="PF09292">
    <property type="entry name" value="Neil1-DNA_bind"/>
    <property type="match status" value="1"/>
</dbReference>
<dbReference type="SMART" id="SM00898">
    <property type="entry name" value="Fapy_DNA_glyco"/>
    <property type="match status" value="1"/>
</dbReference>
<dbReference type="SMART" id="SM01232">
    <property type="entry name" value="H2TH"/>
    <property type="match status" value="1"/>
</dbReference>
<dbReference type="SUPFAM" id="SSF57716">
    <property type="entry name" value="Glucocorticoid receptor-like (DNA-binding domain)"/>
    <property type="match status" value="1"/>
</dbReference>
<dbReference type="SUPFAM" id="SSF81624">
    <property type="entry name" value="N-terminal domain of MutM-like DNA repair proteins"/>
    <property type="match status" value="1"/>
</dbReference>
<dbReference type="SUPFAM" id="SSF46946">
    <property type="entry name" value="S13-like H2TH domain"/>
    <property type="match status" value="1"/>
</dbReference>
<dbReference type="PROSITE" id="PS51068">
    <property type="entry name" value="FPG_CAT"/>
    <property type="match status" value="1"/>
</dbReference>
<evidence type="ECO:0000250" key="1"/>
<evidence type="ECO:0000255" key="2">
    <source>
        <dbReference type="PROSITE-ProRule" id="PRU00392"/>
    </source>
</evidence>
<evidence type="ECO:0000256" key="3">
    <source>
        <dbReference type="SAM" id="MobiDB-lite"/>
    </source>
</evidence>
<evidence type="ECO:0000269" key="4">
    <source>
    </source>
</evidence>
<evidence type="ECO:0000269" key="5">
    <source>
    </source>
</evidence>
<evidence type="ECO:0000269" key="6">
    <source>
    </source>
</evidence>
<evidence type="ECO:0000269" key="7">
    <source>
    </source>
</evidence>
<evidence type="ECO:0000269" key="8">
    <source>
    </source>
</evidence>
<evidence type="ECO:0000269" key="9">
    <source>
    </source>
</evidence>
<evidence type="ECO:0000269" key="10">
    <source>
    </source>
</evidence>
<evidence type="ECO:0000269" key="11">
    <source>
    </source>
</evidence>
<evidence type="ECO:0000269" key="12">
    <source>
    </source>
</evidence>
<evidence type="ECO:0000269" key="13">
    <source ref="3"/>
</evidence>
<evidence type="ECO:0000305" key="14"/>
<evidence type="ECO:0007829" key="15">
    <source>
        <dbReference type="PDB" id="5ITQ"/>
    </source>
</evidence>
<evidence type="ECO:0007829" key="16">
    <source>
        <dbReference type="PDB" id="5ITU"/>
    </source>
</evidence>
<sequence>MPEGPELHLASQFVNEACRALVFGGCVEKSSVSRNPEVPFESSAYRISASARGKELRLILSPLPGAQPQQEPLALVFRFGMSGSFQLVPREELPRHAHLRFYTAPPGPRLALCFVDIRRFGRWDLGGKWQPGRGPCVLQEYQQFRENVLRNLADKAFDRPICEALLDQRFFNGIGNYLRAEILYRLKIPPFEKARSVLEALQQHRPSPELTLSQKIRTKLQNPDLLELCHSVPKEVVQLGGKGYGSESGEEDFAAFRAWLRCYGMPGMSSLQDRHGRTIWFQGDPGPLAPKGRKSRKKKSKATQLSPEDRVEDALPPSKAPSRTRRAKRDLPKRTATQRPEGTSLQQDPEAPTVPKKGRRKGRQAASGHCRPRKVKADIPSLEPEGTSAS</sequence>
<comment type="function">
    <text evidence="4 5 6 7">Involved in base excision repair of DNA damaged by oxidation or by mutagenic agents. Acts as a DNA glycosylase that recognizes and removes damaged bases. Has a preference for oxidized pyrimidines, such as thymine glycol, formamidopyrimidine (Fapy) and 5-hydroxyuracil. Has marginal activity towards 8-oxoguanine. Has AP (apurinic/apyrimidinic) lyase activity and introduces nicks in the DNA strand. Cleaves the DNA backbone by beta-delta elimination to generate a single-strand break at the site of the removed base with both 3'- and 5'-phosphates. Has DNA glycosylase/lyase activity towards mismatched uracil and thymine, in particular in U:C and T:C mismatches. Specifically binds 5-hydroxymethylcytosine (5hmC), suggesting that it acts as a specific reader of 5hmC.</text>
</comment>
<comment type="catalytic activity">
    <reaction evidence="2">
        <text>2'-deoxyribonucleotide-(2'-deoxyribose 5'-phosphate)-2'-deoxyribonucleotide-DNA = a 3'-end 2'-deoxyribonucleotide-(2,3-dehydro-2,3-deoxyribose 5'-phosphate)-DNA + a 5'-end 5'-phospho-2'-deoxyribonucleoside-DNA + H(+)</text>
        <dbReference type="Rhea" id="RHEA:66592"/>
        <dbReference type="Rhea" id="RHEA-COMP:13180"/>
        <dbReference type="Rhea" id="RHEA-COMP:16897"/>
        <dbReference type="Rhea" id="RHEA-COMP:17067"/>
        <dbReference type="ChEBI" id="CHEBI:15378"/>
        <dbReference type="ChEBI" id="CHEBI:136412"/>
        <dbReference type="ChEBI" id="CHEBI:157695"/>
        <dbReference type="ChEBI" id="CHEBI:167181"/>
        <dbReference type="EC" id="4.2.99.18"/>
    </reaction>
</comment>
<comment type="subcellular location">
    <subcellularLocation>
        <location evidence="9">Cytoplasm</location>
        <location evidence="9">Cytoskeleton</location>
        <location evidence="9">Microtubule organizing center</location>
        <location evidence="9">Centrosome</location>
    </subcellularLocation>
    <subcellularLocation>
        <location evidence="9">Nucleus</location>
    </subcellularLocation>
    <subcellularLocation>
        <location evidence="9">Chromosome</location>
    </subcellularLocation>
    <text>During mitosis, associates with centrosomes and condensed chromatin.</text>
</comment>
<comment type="tissue specificity">
    <text evidence="4">Ubiquitous.</text>
</comment>
<comment type="induction">
    <text evidence="4">Up-regulated during S-phase.</text>
</comment>
<comment type="RNA editing">
    <location>
        <position position="242" evidence="10"/>
    </location>
    <text>The edited form removes thymine glycol from duplex DNA 30 times more slowly than the form encoded in the genome, whereas editing enhances repair of the guanidinohydantoin lesion by NEIL1. The recoding site is a preferred editing site for the RNA editing adenosine deaminase ADAR1.</text>
</comment>
<comment type="similarity">
    <text evidence="2">Belongs to the FPG family.</text>
</comment>
<comment type="sequence caution" evidence="14">
    <conflict type="miscellaneous discrepancy">
        <sequence resource="EMBL" id="AK128372"/>
    </conflict>
    <text>Erroneous CDS prediction.</text>
</comment>
<comment type="online information" name="Atlas of Genetics and Cytogenetics in Oncology and Haematology">
    <link uri="https://atlasgeneticsoncology.org/gene/41519/NEIL1"/>
</comment>
<accession>Q96FI4</accession>
<accession>D3DW75</accession>
<accession>Q6ZRA7</accession>
<accession>Q86XW7</accession>
<accession>Q9H6C3</accession>
<reference key="1">
    <citation type="journal article" date="2002" name="J. Biol. Chem.">
        <title>A back-up glycosylase in Nth1 knock-out mice is a functional Nei (endonuclease VIII) homologue.</title>
        <authorList>
            <person name="Takao M."/>
            <person name="Kanno S."/>
            <person name="Kobayashi K."/>
            <person name="Zhang Q.-M."/>
            <person name="Yonei S."/>
            <person name="van der Horst G.T.J."/>
            <person name="Yasui A."/>
        </authorList>
    </citation>
    <scope>NUCLEOTIDE SEQUENCE [MRNA]</scope>
    <scope>FUNCTION</scope>
    <source>
        <tissue>Testis</tissue>
    </source>
</reference>
<reference key="2">
    <citation type="journal article" date="2004" name="Nat. Genet.">
        <title>Complete sequencing and characterization of 21,243 full-length human cDNAs.</title>
        <authorList>
            <person name="Ota T."/>
            <person name="Suzuki Y."/>
            <person name="Nishikawa T."/>
            <person name="Otsuki T."/>
            <person name="Sugiyama T."/>
            <person name="Irie R."/>
            <person name="Wakamatsu A."/>
            <person name="Hayashi K."/>
            <person name="Sato H."/>
            <person name="Nagai K."/>
            <person name="Kimura K."/>
            <person name="Makita H."/>
            <person name="Sekine M."/>
            <person name="Obayashi M."/>
            <person name="Nishi T."/>
            <person name="Shibahara T."/>
            <person name="Tanaka T."/>
            <person name="Ishii S."/>
            <person name="Yamamoto J."/>
            <person name="Saito K."/>
            <person name="Kawai Y."/>
            <person name="Isono Y."/>
            <person name="Nakamura Y."/>
            <person name="Nagahari K."/>
            <person name="Murakami K."/>
            <person name="Yasuda T."/>
            <person name="Iwayanagi T."/>
            <person name="Wagatsuma M."/>
            <person name="Shiratori A."/>
            <person name="Sudo H."/>
            <person name="Hosoiri T."/>
            <person name="Kaku Y."/>
            <person name="Kodaira H."/>
            <person name="Kondo H."/>
            <person name="Sugawara M."/>
            <person name="Takahashi M."/>
            <person name="Kanda K."/>
            <person name="Yokoi T."/>
            <person name="Furuya T."/>
            <person name="Kikkawa E."/>
            <person name="Omura Y."/>
            <person name="Abe K."/>
            <person name="Kamihara K."/>
            <person name="Katsuta N."/>
            <person name="Sato K."/>
            <person name="Tanikawa M."/>
            <person name="Yamazaki M."/>
            <person name="Ninomiya K."/>
            <person name="Ishibashi T."/>
            <person name="Yamashita H."/>
            <person name="Murakawa K."/>
            <person name="Fujimori K."/>
            <person name="Tanai H."/>
            <person name="Kimata M."/>
            <person name="Watanabe M."/>
            <person name="Hiraoka S."/>
            <person name="Chiba Y."/>
            <person name="Ishida S."/>
            <person name="Ono Y."/>
            <person name="Takiguchi S."/>
            <person name="Watanabe S."/>
            <person name="Yosida M."/>
            <person name="Hotuta T."/>
            <person name="Kusano J."/>
            <person name="Kanehori K."/>
            <person name="Takahashi-Fujii A."/>
            <person name="Hara H."/>
            <person name="Tanase T.-O."/>
            <person name="Nomura Y."/>
            <person name="Togiya S."/>
            <person name="Komai F."/>
            <person name="Hara R."/>
            <person name="Takeuchi K."/>
            <person name="Arita M."/>
            <person name="Imose N."/>
            <person name="Musashino K."/>
            <person name="Yuuki H."/>
            <person name="Oshima A."/>
            <person name="Sasaki N."/>
            <person name="Aotsuka S."/>
            <person name="Yoshikawa Y."/>
            <person name="Matsunawa H."/>
            <person name="Ichihara T."/>
            <person name="Shiohata N."/>
            <person name="Sano S."/>
            <person name="Moriya S."/>
            <person name="Momiyama H."/>
            <person name="Satoh N."/>
            <person name="Takami S."/>
            <person name="Terashima Y."/>
            <person name="Suzuki O."/>
            <person name="Nakagawa S."/>
            <person name="Senoh A."/>
            <person name="Mizoguchi H."/>
            <person name="Goto Y."/>
            <person name="Shimizu F."/>
            <person name="Wakebe H."/>
            <person name="Hishigaki H."/>
            <person name="Watanabe T."/>
            <person name="Sugiyama A."/>
            <person name="Takemoto M."/>
            <person name="Kawakami B."/>
            <person name="Yamazaki M."/>
            <person name="Watanabe K."/>
            <person name="Kumagai A."/>
            <person name="Itakura S."/>
            <person name="Fukuzumi Y."/>
            <person name="Fujimori Y."/>
            <person name="Komiyama M."/>
            <person name="Tashiro H."/>
            <person name="Tanigami A."/>
            <person name="Fujiwara T."/>
            <person name="Ono T."/>
            <person name="Yamada K."/>
            <person name="Fujii Y."/>
            <person name="Ozaki K."/>
            <person name="Hirao M."/>
            <person name="Ohmori Y."/>
            <person name="Kawabata A."/>
            <person name="Hikiji T."/>
            <person name="Kobatake N."/>
            <person name="Inagaki H."/>
            <person name="Ikema Y."/>
            <person name="Okamoto S."/>
            <person name="Okitani R."/>
            <person name="Kawakami T."/>
            <person name="Noguchi S."/>
            <person name="Itoh T."/>
            <person name="Shigeta K."/>
            <person name="Senba T."/>
            <person name="Matsumura K."/>
            <person name="Nakajima Y."/>
            <person name="Mizuno T."/>
            <person name="Morinaga M."/>
            <person name="Sasaki M."/>
            <person name="Togashi T."/>
            <person name="Oyama M."/>
            <person name="Hata H."/>
            <person name="Watanabe M."/>
            <person name="Komatsu T."/>
            <person name="Mizushima-Sugano J."/>
            <person name="Satoh T."/>
            <person name="Shirai Y."/>
            <person name="Takahashi Y."/>
            <person name="Nakagawa K."/>
            <person name="Okumura K."/>
            <person name="Nagase T."/>
            <person name="Nomura N."/>
            <person name="Kikuchi H."/>
            <person name="Masuho Y."/>
            <person name="Yamashita R."/>
            <person name="Nakai K."/>
            <person name="Yada T."/>
            <person name="Nakamura Y."/>
            <person name="Ohara O."/>
            <person name="Isogai T."/>
            <person name="Sugano S."/>
        </authorList>
    </citation>
    <scope>NUCLEOTIDE SEQUENCE [LARGE SCALE MRNA]</scope>
</reference>
<reference key="3">
    <citation type="submission" date="2003-03" db="EMBL/GenBank/DDBJ databases">
        <authorList>
            <consortium name="NIEHS SNPs program"/>
        </authorList>
    </citation>
    <scope>NUCLEOTIDE SEQUENCE [GENOMIC DNA]</scope>
    <scope>VARIANTS CYS-82; ASP-83; ARG-136 AND ASN-252</scope>
</reference>
<reference key="4">
    <citation type="journal article" date="2006" name="Nature">
        <title>Analysis of the DNA sequence and duplication history of human chromosome 15.</title>
        <authorList>
            <person name="Zody M.C."/>
            <person name="Garber M."/>
            <person name="Sharpe T."/>
            <person name="Young S.K."/>
            <person name="Rowen L."/>
            <person name="O'Neill K."/>
            <person name="Whittaker C.A."/>
            <person name="Kamal M."/>
            <person name="Chang J.L."/>
            <person name="Cuomo C.A."/>
            <person name="Dewar K."/>
            <person name="FitzGerald M.G."/>
            <person name="Kodira C.D."/>
            <person name="Madan A."/>
            <person name="Qin S."/>
            <person name="Yang X."/>
            <person name="Abbasi N."/>
            <person name="Abouelleil A."/>
            <person name="Arachchi H.M."/>
            <person name="Baradarani L."/>
            <person name="Birditt B."/>
            <person name="Bloom S."/>
            <person name="Bloom T."/>
            <person name="Borowsky M.L."/>
            <person name="Burke J."/>
            <person name="Butler J."/>
            <person name="Cook A."/>
            <person name="DeArellano K."/>
            <person name="DeCaprio D."/>
            <person name="Dorris L. III"/>
            <person name="Dors M."/>
            <person name="Eichler E.E."/>
            <person name="Engels R."/>
            <person name="Fahey J."/>
            <person name="Fleetwood P."/>
            <person name="Friedman C."/>
            <person name="Gearin G."/>
            <person name="Hall J.L."/>
            <person name="Hensley G."/>
            <person name="Johnson E."/>
            <person name="Jones C."/>
            <person name="Kamat A."/>
            <person name="Kaur A."/>
            <person name="Locke D.P."/>
            <person name="Madan A."/>
            <person name="Munson G."/>
            <person name="Jaffe D.B."/>
            <person name="Lui A."/>
            <person name="Macdonald P."/>
            <person name="Mauceli E."/>
            <person name="Naylor J.W."/>
            <person name="Nesbitt R."/>
            <person name="Nicol R."/>
            <person name="O'Leary S.B."/>
            <person name="Ratcliffe A."/>
            <person name="Rounsley S."/>
            <person name="She X."/>
            <person name="Sneddon K.M.B."/>
            <person name="Stewart S."/>
            <person name="Sougnez C."/>
            <person name="Stone S.M."/>
            <person name="Topham K."/>
            <person name="Vincent D."/>
            <person name="Wang S."/>
            <person name="Zimmer A.R."/>
            <person name="Birren B.W."/>
            <person name="Hood L."/>
            <person name="Lander E.S."/>
            <person name="Nusbaum C."/>
        </authorList>
    </citation>
    <scope>NUCLEOTIDE SEQUENCE [LARGE SCALE GENOMIC DNA]</scope>
</reference>
<reference key="5">
    <citation type="submission" date="2005-09" db="EMBL/GenBank/DDBJ databases">
        <authorList>
            <person name="Mural R.J."/>
            <person name="Istrail S."/>
            <person name="Sutton G.G."/>
            <person name="Florea L."/>
            <person name="Halpern A.L."/>
            <person name="Mobarry C.M."/>
            <person name="Lippert R."/>
            <person name="Walenz B."/>
            <person name="Shatkay H."/>
            <person name="Dew I."/>
            <person name="Miller J.R."/>
            <person name="Flanigan M.J."/>
            <person name="Edwards N.J."/>
            <person name="Bolanos R."/>
            <person name="Fasulo D."/>
            <person name="Halldorsson B.V."/>
            <person name="Hannenhalli S."/>
            <person name="Turner R."/>
            <person name="Yooseph S."/>
            <person name="Lu F."/>
            <person name="Nusskern D.R."/>
            <person name="Shue B.C."/>
            <person name="Zheng X.H."/>
            <person name="Zhong F."/>
            <person name="Delcher A.L."/>
            <person name="Huson D.H."/>
            <person name="Kravitz S.A."/>
            <person name="Mouchard L."/>
            <person name="Reinert K."/>
            <person name="Remington K.A."/>
            <person name="Clark A.G."/>
            <person name="Waterman M.S."/>
            <person name="Eichler E.E."/>
            <person name="Adams M.D."/>
            <person name="Hunkapiller M.W."/>
            <person name="Myers E.W."/>
            <person name="Venter J.C."/>
        </authorList>
    </citation>
    <scope>NUCLEOTIDE SEQUENCE [LARGE SCALE GENOMIC DNA]</scope>
</reference>
<reference key="6">
    <citation type="journal article" date="2004" name="Genome Res.">
        <title>The status, quality, and expansion of the NIH full-length cDNA project: the Mammalian Gene Collection (MGC).</title>
        <authorList>
            <consortium name="The MGC Project Team"/>
        </authorList>
    </citation>
    <scope>NUCLEOTIDE SEQUENCE [LARGE SCALE MRNA]</scope>
    <source>
        <tissue>Lung</tissue>
    </source>
</reference>
<reference key="7">
    <citation type="journal article" date="2002" name="DNA Repair">
        <title>A novel human DNA glycosylase that removes oxidative DNA damage and is homologous to Escherichia coli endonuclease VIII.</title>
        <authorList>
            <person name="Bandaru V."/>
            <person name="Sunkara S."/>
            <person name="Wallace S.S."/>
            <person name="Bond J.P."/>
        </authorList>
    </citation>
    <scope>MUTAGENESIS OF PRO-2 AND GLU-3</scope>
    <scope>FUNCTION</scope>
</reference>
<reference key="8">
    <citation type="journal article" date="2002" name="Proc. Natl. Acad. Sci. U.S.A.">
        <title>Identification and characterization of a human DNA glycosylase for repair of modified bases in oxidatively damaged DNA.</title>
        <authorList>
            <person name="Hazra T.K."/>
            <person name="Izumi T."/>
            <person name="Boldogh I."/>
            <person name="Imhoff B."/>
            <person name="Kow Y.W."/>
            <person name="Jaruga P."/>
            <person name="Dizdaroglu M."/>
            <person name="Mitra S."/>
        </authorList>
    </citation>
    <scope>MUTAGENESIS OF PRO-2</scope>
    <scope>FUNCTION</scope>
    <scope>INDUCTION</scope>
    <scope>TISSUE SPECIFICITY</scope>
</reference>
<reference key="9">
    <citation type="journal article" date="2003" name="J. Biol. Chem.">
        <title>Repair of oxidized bases in DNA bubble structures by human DNA glycosylases NEIL1 and NEIL2.</title>
        <authorList>
            <person name="Dou H."/>
            <person name="Mitra S."/>
            <person name="Hazra T.K."/>
        </authorList>
    </citation>
    <scope>FUNCTION</scope>
    <scope>MUTAGENESIS OF LYS-54</scope>
</reference>
<reference key="10">
    <citation type="journal article" date="2007" name="DNA Repair">
        <title>Human NEIL1 localizes with the centrosomes and condensed chromosomes during mitosis.</title>
        <authorList>
            <person name="Hildrestrand G.A."/>
            <person name="Rolseth V."/>
            <person name="Bjoras M."/>
            <person name="Luna L."/>
        </authorList>
    </citation>
    <scope>SUBCELLULAR LOCATION</scope>
</reference>
<reference key="11">
    <citation type="journal article" date="2010" name="Proc. Natl. Acad. Sci. U.S.A.">
        <title>RNA editing changes the lesion specificity for the DNA repair enzyme NEIL1.</title>
        <authorList>
            <person name="Yeo J."/>
            <person name="Goodman R.A."/>
            <person name="Schirle N.T."/>
            <person name="David S.S."/>
            <person name="Beal P.A."/>
        </authorList>
    </citation>
    <scope>RNA EDITING OF POSITION 242</scope>
</reference>
<reference key="12">
    <citation type="journal article" date="2004" name="Proc. Natl. Acad. Sci. U.S.A.">
        <title>The crystal structure of human endonuclease VIII-like 1 (NEIL1) reveals a zincless finger motif required for glycosylase activity.</title>
        <authorList>
            <person name="Doublie S."/>
            <person name="Bandaru V."/>
            <person name="Bond J.P."/>
            <person name="Wallace S.S."/>
        </authorList>
    </citation>
    <scope>X-RAY CRYSTALLOGRAPHY (2.1 ANGSTROMS) OF 1-334</scope>
    <scope>MUTAGENESIS OF ARG-277</scope>
</reference>
<reference key="13">
    <citation type="journal article" date="2011" name="Kidney Int.">
        <title>Exome sequencing identified MYO1E and NEIL1 as candidate genes for human autosomal recessive steroid-resistant nephrotic syndrome.</title>
        <authorList>
            <person name="Sanna-Cherchi S."/>
            <person name="Burgess K.E."/>
            <person name="Nees S.N."/>
            <person name="Caridi G."/>
            <person name="Weng P.L."/>
            <person name="Dagnino M."/>
            <person name="Bodria M."/>
            <person name="Carrea A."/>
            <person name="Allegretta M.A."/>
            <person name="Kim H.R."/>
            <person name="Perry B.J."/>
            <person name="Gigante M."/>
            <person name="Clark L.N."/>
            <person name="Kisselev S."/>
            <person name="Cusi D."/>
            <person name="Gesualdo L."/>
            <person name="Allegri L."/>
            <person name="Scolari F."/>
            <person name="D'Agati V."/>
            <person name="Shapiro L.S."/>
            <person name="Pecoraro C."/>
            <person name="Palomero T."/>
            <person name="Ghiggeri G.M."/>
            <person name="Gharavi A.G."/>
        </authorList>
    </citation>
    <scope>VARIANTS GLN-159 AND LYS-181</scope>
</reference>
<reference key="14">
    <citation type="journal article" date="2013" name="J. Hum. Genet.">
        <title>A molecular genetic analysis of childhood nephrotic syndrome in a cohort of Saudi Arabian families.</title>
        <authorList>
            <person name="Al-Hamed M.H."/>
            <person name="Al-Sabban E."/>
            <person name="Al-Mojalli H."/>
            <person name="Al-Harbi N."/>
            <person name="Faqeih E."/>
            <person name="Al Shaya H."/>
            <person name="Alhasan K."/>
            <person name="Al-Hissi S."/>
            <person name="Rajab M."/>
            <person name="Edwards N."/>
            <person name="Al-Abbad A."/>
            <person name="Al-Hassoun I."/>
            <person name="Sayer J.A."/>
            <person name="Meyer B.F."/>
        </authorList>
    </citation>
    <scope>VARIANTS ASP-44 AND THR-156</scope>
</reference>
<protein>
    <recommendedName>
        <fullName>Endonuclease 8-like 1</fullName>
        <ecNumber>3.2.2.-</ecNumber>
        <ecNumber>4.2.99.18</ecNumber>
    </recommendedName>
    <alternativeName>
        <fullName>DNA glycosylase/AP lyase Neil1</fullName>
    </alternativeName>
    <alternativeName>
        <fullName>DNA-(apurinic or apyrimidinic site) lyase Neil1</fullName>
    </alternativeName>
    <alternativeName>
        <fullName>Endonuclease VIII-like 1</fullName>
    </alternativeName>
    <alternativeName>
        <fullName>FPG1</fullName>
    </alternativeName>
    <alternativeName>
        <fullName>Nei homolog 1</fullName>
        <shortName>NEH1</shortName>
    </alternativeName>
    <alternativeName>
        <fullName>Nei-like protein 1</fullName>
    </alternativeName>
</protein>
<keyword id="KW-0002">3D-structure</keyword>
<keyword id="KW-0158">Chromosome</keyword>
<keyword id="KW-0963">Cytoplasm</keyword>
<keyword id="KW-0206">Cytoskeleton</keyword>
<keyword id="KW-0227">DNA damage</keyword>
<keyword id="KW-0234">DNA repair</keyword>
<keyword id="KW-0238">DNA-binding</keyword>
<keyword id="KW-0326">Glycosidase</keyword>
<keyword id="KW-0378">Hydrolase</keyword>
<keyword id="KW-0456">Lyase</keyword>
<keyword id="KW-0511">Multifunctional enzyme</keyword>
<keyword id="KW-0539">Nucleus</keyword>
<keyword id="KW-1267">Proteomics identification</keyword>
<keyword id="KW-1185">Reference proteome</keyword>
<keyword id="KW-0691">RNA editing</keyword>
<feature type="initiator methionine" description="Removed">
    <location>
        <position position="1"/>
    </location>
</feature>
<feature type="chain" id="PRO_0000170905" description="Endonuclease 8-like 1">
    <location>
        <begin position="2"/>
        <end position="390"/>
    </location>
</feature>
<feature type="region of interest" description="Disordered" evidence="3">
    <location>
        <begin position="278"/>
        <end position="390"/>
    </location>
</feature>
<feature type="compositionally biased region" description="Basic residues" evidence="3">
    <location>
        <begin position="291"/>
        <end position="301"/>
    </location>
</feature>
<feature type="compositionally biased region" description="Polar residues" evidence="3">
    <location>
        <begin position="335"/>
        <end position="347"/>
    </location>
</feature>
<feature type="active site" description="Schiff-base intermediate with DNA" evidence="14">
    <location>
        <position position="2"/>
    </location>
</feature>
<feature type="active site" description="Proton donor" evidence="14">
    <location>
        <position position="3"/>
    </location>
</feature>
<feature type="active site" description="Proton donor; for beta-elimination activity" evidence="14">
    <location>
        <position position="54"/>
    </location>
</feature>
<feature type="active site" description="Proton donor; for delta-elimination activity" evidence="14">
    <location>
        <position position="339"/>
    </location>
</feature>
<feature type="binding site" evidence="1">
    <location>
        <position position="176"/>
    </location>
    <ligand>
        <name>DNA</name>
        <dbReference type="ChEBI" id="CHEBI:16991"/>
    </ligand>
</feature>
<feature type="binding site" evidence="1">
    <location>
        <position position="339"/>
    </location>
    <ligand>
        <name>DNA</name>
        <dbReference type="ChEBI" id="CHEBI:16991"/>
    </ligand>
</feature>
<feature type="sequence variant" id="VAR_087607" description="Found in a patient with childhood-onset nephrotic syndrome, focal segmental glomerulosclerosis and end-stage renal disease; uncertain significance; dbSNP:rs1348165160." evidence="12">
    <original>A</original>
    <variation>D</variation>
    <location>
        <position position="44"/>
    </location>
</feature>
<feature type="sequence variant" id="VAR_020580" description="In dbSNP:rs5745905." evidence="13">
    <original>S</original>
    <variation>C</variation>
    <location>
        <position position="82"/>
    </location>
</feature>
<feature type="sequence variant" id="VAR_020581" description="In dbSNP:rs5745906." evidence="13">
    <original>G</original>
    <variation>D</variation>
    <location>
        <position position="83"/>
    </location>
</feature>
<feature type="sequence variant" id="VAR_020582" description="In dbSNP:rs5745907." evidence="13">
    <original>C</original>
    <variation>R</variation>
    <location>
        <position position="136"/>
    </location>
</feature>
<feature type="sequence variant" id="VAR_087608" description="Found in a patient with childhood-onset steroid-resistant nephrotic syndrome; uncertain significance." evidence="12">
    <original>A</original>
    <variation>T</variation>
    <location>
        <position position="156"/>
    </location>
</feature>
<feature type="sequence variant" id="VAR_065963" description="In dbSNP:rs769880000." evidence="11">
    <original>R</original>
    <variation>Q</variation>
    <location>
        <position position="159"/>
    </location>
</feature>
<feature type="sequence variant" id="VAR_065964" description="Found in a patient with nephrotic syndrome also carrying mutation P-159 in MYO1E; dbSNP:rs749636951." evidence="11">
    <original>E</original>
    <variation>K</variation>
    <location>
        <position position="181"/>
    </location>
</feature>
<feature type="sequence variant" id="VAR_020583" description="In dbSNP:rs7183491.">
    <original>I</original>
    <variation>M</variation>
    <location>
        <position position="182"/>
    </location>
</feature>
<feature type="sequence variant" id="VAR_065018" description="In RNA edited version.">
    <original>K</original>
    <variation>R</variation>
    <location>
        <position position="242"/>
    </location>
</feature>
<feature type="sequence variant" id="VAR_020584" description="In dbSNP:rs5745926." evidence="13">
    <original>D</original>
    <variation>N</variation>
    <location>
        <position position="252"/>
    </location>
</feature>
<feature type="mutagenesis site" description="Loss of glycosylase and AP lyase activity." evidence="4 6">
    <original>P</original>
    <variation>T</variation>
    <location>
        <position position="2"/>
    </location>
</feature>
<feature type="mutagenesis site" description="Loss of glycosylase activity." evidence="4 6">
    <location>
        <position position="2"/>
    </location>
</feature>
<feature type="mutagenesis site" description="Loss of glycosylase and AP lyase activity." evidence="6">
    <original>E</original>
    <variation>Q</variation>
    <location>
        <position position="3"/>
    </location>
</feature>
<feature type="mutagenesis site" description="Loss of glycosylase activity." evidence="7">
    <original>K</original>
    <variation>L</variation>
    <location>
        <position position="54"/>
    </location>
</feature>
<feature type="mutagenesis site" description="Strongly reduced glycosylase activity. Has little effect on AP lyase activity." evidence="8">
    <original>R</original>
    <variation>A</variation>
    <location>
        <position position="277"/>
    </location>
</feature>
<feature type="sequence conflict" description="In Ref. 2; BAB15337." evidence="14" ref="2">
    <original>N</original>
    <variation>S</variation>
    <location>
        <position position="147"/>
    </location>
</feature>
<feature type="helix" evidence="15">
    <location>
        <begin position="4"/>
        <end position="18"/>
    </location>
</feature>
<feature type="strand" evidence="15">
    <location>
        <begin position="23"/>
        <end position="26"/>
    </location>
</feature>
<feature type="strand" evidence="15">
    <location>
        <begin position="41"/>
        <end position="52"/>
    </location>
</feature>
<feature type="strand" evidence="15">
    <location>
        <begin position="55"/>
        <end position="62"/>
    </location>
</feature>
<feature type="strand" evidence="15">
    <location>
        <begin position="73"/>
        <end position="78"/>
    </location>
</feature>
<feature type="turn" evidence="15">
    <location>
        <begin position="80"/>
        <end position="82"/>
    </location>
</feature>
<feature type="strand" evidence="15">
    <location>
        <begin position="83"/>
        <end position="89"/>
    </location>
</feature>
<feature type="helix" evidence="15">
    <location>
        <begin position="90"/>
        <end position="92"/>
    </location>
</feature>
<feature type="strand" evidence="15">
    <location>
        <begin position="97"/>
        <end position="103"/>
    </location>
</feature>
<feature type="strand" evidence="15">
    <location>
        <begin position="105"/>
        <end position="107"/>
    </location>
</feature>
<feature type="strand" evidence="15">
    <location>
        <begin position="110"/>
        <end position="116"/>
    </location>
</feature>
<feature type="strand" evidence="15">
    <location>
        <begin position="122"/>
        <end position="127"/>
    </location>
</feature>
<feature type="turn" evidence="15">
    <location>
        <begin position="137"/>
        <end position="139"/>
    </location>
</feature>
<feature type="helix" evidence="15">
    <location>
        <begin position="141"/>
        <end position="150"/>
    </location>
</feature>
<feature type="turn" evidence="15">
    <location>
        <begin position="151"/>
        <end position="153"/>
    </location>
</feature>
<feature type="helix" evidence="15">
    <location>
        <begin position="155"/>
        <end position="158"/>
    </location>
</feature>
<feature type="helix" evidence="15">
    <location>
        <begin position="161"/>
        <end position="164"/>
    </location>
</feature>
<feature type="turn" evidence="15">
    <location>
        <begin position="168"/>
        <end position="170"/>
    </location>
</feature>
<feature type="helix" evidence="15">
    <location>
        <begin position="176"/>
        <end position="186"/>
    </location>
</feature>
<feature type="helix" evidence="15">
    <location>
        <begin position="194"/>
        <end position="198"/>
    </location>
</feature>
<feature type="helix" evidence="15">
    <location>
        <begin position="199"/>
        <end position="201"/>
    </location>
</feature>
<feature type="helix" evidence="15">
    <location>
        <begin position="212"/>
        <end position="218"/>
    </location>
</feature>
<feature type="turn" evidence="15">
    <location>
        <begin position="219"/>
        <end position="221"/>
    </location>
</feature>
<feature type="helix" evidence="15">
    <location>
        <begin position="225"/>
        <end position="240"/>
    </location>
</feature>
<feature type="helix" evidence="16">
    <location>
        <begin position="243"/>
        <end position="245"/>
    </location>
</feature>
<feature type="helix" evidence="15">
    <location>
        <begin position="249"/>
        <end position="259"/>
    </location>
</feature>
<feature type="strand" evidence="15">
    <location>
        <begin position="269"/>
        <end position="272"/>
    </location>
</feature>
<feature type="strand" evidence="15">
    <location>
        <begin position="278"/>
        <end position="283"/>
    </location>
</feature>
<gene>
    <name type="primary">NEIL1</name>
</gene>
<name>NEIL1_HUMAN</name>
<proteinExistence type="evidence at protein level"/>